<sequence length="101" mass="10809">MIPGELVIDDGEHTLNAGRHTIALVVANTGDRPVQVGSHYHFHEVNDALSFDRAAARGFRLNIAAGTAVRFEPGQTRTVELVELGGARAVYGFQGKVMGPL</sequence>
<keyword id="KW-0963">Cytoplasm</keyword>
<keyword id="KW-0378">Hydrolase</keyword>
<keyword id="KW-1185">Reference proteome</keyword>
<evidence type="ECO:0000255" key="1">
    <source>
        <dbReference type="HAMAP-Rule" id="MF_01954"/>
    </source>
</evidence>
<name>URE2_BURMA</name>
<organism>
    <name type="scientific">Burkholderia mallei (strain ATCC 23344)</name>
    <dbReference type="NCBI Taxonomy" id="243160"/>
    <lineage>
        <taxon>Bacteria</taxon>
        <taxon>Pseudomonadati</taxon>
        <taxon>Pseudomonadota</taxon>
        <taxon>Betaproteobacteria</taxon>
        <taxon>Burkholderiales</taxon>
        <taxon>Burkholderiaceae</taxon>
        <taxon>Burkholderia</taxon>
        <taxon>pseudomallei group</taxon>
    </lineage>
</organism>
<gene>
    <name evidence="1" type="primary">ureB</name>
    <name type="ordered locus">BMA2183</name>
</gene>
<reference key="1">
    <citation type="journal article" date="2004" name="Proc. Natl. Acad. Sci. U.S.A.">
        <title>Structural flexibility in the Burkholderia mallei genome.</title>
        <authorList>
            <person name="Nierman W.C."/>
            <person name="DeShazer D."/>
            <person name="Kim H.S."/>
            <person name="Tettelin H."/>
            <person name="Nelson K.E."/>
            <person name="Feldblyum T.V."/>
            <person name="Ulrich R.L."/>
            <person name="Ronning C.M."/>
            <person name="Brinkac L.M."/>
            <person name="Daugherty S.C."/>
            <person name="Davidsen T.D."/>
            <person name="DeBoy R.T."/>
            <person name="Dimitrov G."/>
            <person name="Dodson R.J."/>
            <person name="Durkin A.S."/>
            <person name="Gwinn M.L."/>
            <person name="Haft D.H."/>
            <person name="Khouri H.M."/>
            <person name="Kolonay J.F."/>
            <person name="Madupu R."/>
            <person name="Mohammoud Y."/>
            <person name="Nelson W.C."/>
            <person name="Radune D."/>
            <person name="Romero C.M."/>
            <person name="Sarria S."/>
            <person name="Selengut J."/>
            <person name="Shamblin C."/>
            <person name="Sullivan S.A."/>
            <person name="White O."/>
            <person name="Yu Y."/>
            <person name="Zafar N."/>
            <person name="Zhou L."/>
            <person name="Fraser C.M."/>
        </authorList>
    </citation>
    <scope>NUCLEOTIDE SEQUENCE [LARGE SCALE GENOMIC DNA]</scope>
    <source>
        <strain>ATCC 23344</strain>
    </source>
</reference>
<dbReference type="EC" id="3.5.1.5" evidence="1"/>
<dbReference type="EMBL" id="CP000010">
    <property type="protein sequence ID" value="AAU50300.1"/>
    <property type="molecule type" value="Genomic_DNA"/>
</dbReference>
<dbReference type="RefSeq" id="WP_004186466.1">
    <property type="nucleotide sequence ID" value="NC_006348.1"/>
</dbReference>
<dbReference type="RefSeq" id="YP_103749.1">
    <property type="nucleotide sequence ID" value="NC_006348.1"/>
</dbReference>
<dbReference type="SMR" id="Q62HS1"/>
<dbReference type="KEGG" id="bma:BMA2183"/>
<dbReference type="PATRIC" id="fig|243160.12.peg.2252"/>
<dbReference type="eggNOG" id="COG0832">
    <property type="taxonomic scope" value="Bacteria"/>
</dbReference>
<dbReference type="HOGENOM" id="CLU_129707_1_1_4"/>
<dbReference type="UniPathway" id="UPA00258">
    <property type="reaction ID" value="UER00370"/>
</dbReference>
<dbReference type="Proteomes" id="UP000006693">
    <property type="component" value="Chromosome 1"/>
</dbReference>
<dbReference type="GO" id="GO:0035550">
    <property type="term" value="C:urease complex"/>
    <property type="evidence" value="ECO:0007669"/>
    <property type="project" value="InterPro"/>
</dbReference>
<dbReference type="GO" id="GO:0009039">
    <property type="term" value="F:urease activity"/>
    <property type="evidence" value="ECO:0007669"/>
    <property type="project" value="UniProtKB-UniRule"/>
</dbReference>
<dbReference type="GO" id="GO:0043419">
    <property type="term" value="P:urea catabolic process"/>
    <property type="evidence" value="ECO:0007669"/>
    <property type="project" value="UniProtKB-UniRule"/>
</dbReference>
<dbReference type="CDD" id="cd00407">
    <property type="entry name" value="Urease_beta"/>
    <property type="match status" value="1"/>
</dbReference>
<dbReference type="FunFam" id="2.10.150.10:FF:000001">
    <property type="entry name" value="Urease subunit beta"/>
    <property type="match status" value="1"/>
</dbReference>
<dbReference type="Gene3D" id="2.10.150.10">
    <property type="entry name" value="Urease, beta subunit"/>
    <property type="match status" value="1"/>
</dbReference>
<dbReference type="HAMAP" id="MF_01954">
    <property type="entry name" value="Urease_beta"/>
    <property type="match status" value="1"/>
</dbReference>
<dbReference type="InterPro" id="IPR002019">
    <property type="entry name" value="Urease_beta-like"/>
</dbReference>
<dbReference type="InterPro" id="IPR036461">
    <property type="entry name" value="Urease_betasu_sf"/>
</dbReference>
<dbReference type="InterPro" id="IPR050069">
    <property type="entry name" value="Urease_subunit"/>
</dbReference>
<dbReference type="NCBIfam" id="NF009682">
    <property type="entry name" value="PRK13203.1"/>
    <property type="match status" value="1"/>
</dbReference>
<dbReference type="NCBIfam" id="TIGR00192">
    <property type="entry name" value="urease_beta"/>
    <property type="match status" value="1"/>
</dbReference>
<dbReference type="PANTHER" id="PTHR33569">
    <property type="entry name" value="UREASE"/>
    <property type="match status" value="1"/>
</dbReference>
<dbReference type="PANTHER" id="PTHR33569:SF1">
    <property type="entry name" value="UREASE"/>
    <property type="match status" value="1"/>
</dbReference>
<dbReference type="Pfam" id="PF00699">
    <property type="entry name" value="Urease_beta"/>
    <property type="match status" value="1"/>
</dbReference>
<dbReference type="SUPFAM" id="SSF51278">
    <property type="entry name" value="Urease, beta-subunit"/>
    <property type="match status" value="1"/>
</dbReference>
<proteinExistence type="inferred from homology"/>
<protein>
    <recommendedName>
        <fullName evidence="1">Urease subunit beta</fullName>
        <ecNumber evidence="1">3.5.1.5</ecNumber>
    </recommendedName>
    <alternativeName>
        <fullName evidence="1">Urea amidohydrolase subunit beta</fullName>
    </alternativeName>
</protein>
<comment type="catalytic activity">
    <reaction evidence="1">
        <text>urea + 2 H2O + H(+) = hydrogencarbonate + 2 NH4(+)</text>
        <dbReference type="Rhea" id="RHEA:20557"/>
        <dbReference type="ChEBI" id="CHEBI:15377"/>
        <dbReference type="ChEBI" id="CHEBI:15378"/>
        <dbReference type="ChEBI" id="CHEBI:16199"/>
        <dbReference type="ChEBI" id="CHEBI:17544"/>
        <dbReference type="ChEBI" id="CHEBI:28938"/>
        <dbReference type="EC" id="3.5.1.5"/>
    </reaction>
</comment>
<comment type="pathway">
    <text evidence="1">Nitrogen metabolism; urea degradation; CO(2) and NH(3) from urea (urease route): step 1/1.</text>
</comment>
<comment type="subunit">
    <text evidence="1">Heterotrimer of UreA (gamma), UreB (beta) and UreC (alpha) subunits. Three heterotrimers associate to form the active enzyme.</text>
</comment>
<comment type="subcellular location">
    <subcellularLocation>
        <location evidence="1">Cytoplasm</location>
    </subcellularLocation>
</comment>
<comment type="similarity">
    <text evidence="1">Belongs to the urease beta subunit family.</text>
</comment>
<accession>Q62HS1</accession>
<feature type="chain" id="PRO_0000234240" description="Urease subunit beta">
    <location>
        <begin position="1"/>
        <end position="101"/>
    </location>
</feature>